<organism>
    <name type="scientific">Shigella boydii serotype 4 (strain Sb227)</name>
    <dbReference type="NCBI Taxonomy" id="300268"/>
    <lineage>
        <taxon>Bacteria</taxon>
        <taxon>Pseudomonadati</taxon>
        <taxon>Pseudomonadota</taxon>
        <taxon>Gammaproteobacteria</taxon>
        <taxon>Enterobacterales</taxon>
        <taxon>Enterobacteriaceae</taxon>
        <taxon>Shigella</taxon>
    </lineage>
</organism>
<feature type="chain" id="PRO_0000285017" description="Ribosomal RNA small subunit methyltransferase F">
    <location>
        <begin position="1"/>
        <end position="479"/>
    </location>
</feature>
<feature type="active site" description="Nucleophile" evidence="1">
    <location>
        <position position="247"/>
    </location>
</feature>
<feature type="binding site" evidence="1">
    <location>
        <begin position="125"/>
        <end position="131"/>
    </location>
    <ligand>
        <name>S-adenosyl-L-methionine</name>
        <dbReference type="ChEBI" id="CHEBI:59789"/>
    </ligand>
</feature>
<feature type="binding site" evidence="1">
    <location>
        <position position="149"/>
    </location>
    <ligand>
        <name>S-adenosyl-L-methionine</name>
        <dbReference type="ChEBI" id="CHEBI:59789"/>
    </ligand>
</feature>
<feature type="binding site" evidence="1">
    <location>
        <position position="176"/>
    </location>
    <ligand>
        <name>S-adenosyl-L-methionine</name>
        <dbReference type="ChEBI" id="CHEBI:59789"/>
    </ligand>
</feature>
<feature type="binding site" evidence="1">
    <location>
        <position position="194"/>
    </location>
    <ligand>
        <name>S-adenosyl-L-methionine</name>
        <dbReference type="ChEBI" id="CHEBI:59789"/>
    </ligand>
</feature>
<gene>
    <name evidence="1" type="primary">rsmF</name>
    <name type="ordered locus">SBO_1250</name>
</gene>
<sequence>MAQHTVYFPDAFLTQMREAMPSTLSFDDFLAACQRPLRRSIRVNTLKISVADFLQLTAPYGWTLTPIPWCEEGFWIERDNEDALPLGSTAEHLSGLFYIQEASSMLPVAALFADGNAPQRVMDVAAAPGSKTTQIAARMNNEGAILANEFSASRVKVLHANISRCGISNVALTHFDGRVFGAAVPEMFDAILLDAPCSGEGVVRKDPDALKNWSPESNQEIAATQRELIDSAFHALRPGGTLVYSTCTLNQEENEAVCLWLKETYPDAVEFLPLGDLFPGANKALTEEGFLHVFPQIYDCEGFFVARLRKTQAIPALPAPKYKVGNFPFSPVKDREAGQIRQAAAGVGLNWDENLRLWQRDKELWLFPVDIEALIGKVRFSRLGIKLAETHNKGYRWQHEAVIALATPDNVNAFELTPQEAEEWYRGRDVYPQAAPVADDVLVTFQHQPIGLAKRIGSRLKNSYPRELVRDGKLFTGNA</sequence>
<protein>
    <recommendedName>
        <fullName evidence="1">Ribosomal RNA small subunit methyltransferase F</fullName>
        <ecNumber evidence="1">2.1.1.178</ecNumber>
    </recommendedName>
    <alternativeName>
        <fullName evidence="1">16S rRNA m5C1407 methyltransferase</fullName>
    </alternativeName>
    <alternativeName>
        <fullName evidence="1">rRNA (cytosine-C(5)-)-methyltransferase RsmF</fullName>
    </alternativeName>
</protein>
<dbReference type="EC" id="2.1.1.178" evidence="1"/>
<dbReference type="EMBL" id="CP000036">
    <property type="protein sequence ID" value="ABB65878.1"/>
    <property type="status" value="ALT_INIT"/>
    <property type="molecule type" value="Genomic_DNA"/>
</dbReference>
<dbReference type="RefSeq" id="WP_000057025.1">
    <property type="nucleotide sequence ID" value="NC_007613.1"/>
</dbReference>
<dbReference type="SMR" id="Q321Y0"/>
<dbReference type="KEGG" id="sbo:SBO_1250"/>
<dbReference type="HOGENOM" id="CLU_005316_6_2_6"/>
<dbReference type="Proteomes" id="UP000007067">
    <property type="component" value="Chromosome"/>
</dbReference>
<dbReference type="GO" id="GO:0005737">
    <property type="term" value="C:cytoplasm"/>
    <property type="evidence" value="ECO:0007669"/>
    <property type="project" value="UniProtKB-SubCell"/>
</dbReference>
<dbReference type="GO" id="GO:0003723">
    <property type="term" value="F:RNA binding"/>
    <property type="evidence" value="ECO:0007669"/>
    <property type="project" value="UniProtKB-KW"/>
</dbReference>
<dbReference type="GO" id="GO:0009383">
    <property type="term" value="F:rRNA (cytosine-C5-)-methyltransferase activity"/>
    <property type="evidence" value="ECO:0007669"/>
    <property type="project" value="TreeGrafter"/>
</dbReference>
<dbReference type="GO" id="GO:0070475">
    <property type="term" value="P:rRNA base methylation"/>
    <property type="evidence" value="ECO:0007669"/>
    <property type="project" value="TreeGrafter"/>
</dbReference>
<dbReference type="CDD" id="cd02440">
    <property type="entry name" value="AdoMet_MTases"/>
    <property type="match status" value="1"/>
</dbReference>
<dbReference type="FunFam" id="3.10.450.720:FF:000001">
    <property type="entry name" value="Ribosomal RNA small subunit methyltransferase F"/>
    <property type="match status" value="1"/>
</dbReference>
<dbReference type="FunFam" id="3.40.50.150:FF:000079">
    <property type="entry name" value="Ribosomal RNA small subunit methyltransferase F"/>
    <property type="match status" value="1"/>
</dbReference>
<dbReference type="Gene3D" id="3.10.450.720">
    <property type="match status" value="1"/>
</dbReference>
<dbReference type="Gene3D" id="3.40.50.150">
    <property type="entry name" value="Vaccinia Virus protein VP39"/>
    <property type="match status" value="1"/>
</dbReference>
<dbReference type="HAMAP" id="MF_01579">
    <property type="entry name" value="16SrRNA_methyltr_F"/>
    <property type="match status" value="1"/>
</dbReference>
<dbReference type="InterPro" id="IPR031341">
    <property type="entry name" value="Methyltr_RsmF_N"/>
</dbReference>
<dbReference type="InterPro" id="IPR049560">
    <property type="entry name" value="MeTrfase_RsmB-F_NOP2_cat"/>
</dbReference>
<dbReference type="InterPro" id="IPR001678">
    <property type="entry name" value="MeTrfase_RsmB-F_NOP2_dom"/>
</dbReference>
<dbReference type="InterPro" id="IPR027391">
    <property type="entry name" value="Nol1_Nop2_Fmu_2"/>
</dbReference>
<dbReference type="InterPro" id="IPR011023">
    <property type="entry name" value="Nop2p"/>
</dbReference>
<dbReference type="InterPro" id="IPR023267">
    <property type="entry name" value="RCMT"/>
</dbReference>
<dbReference type="InterPro" id="IPR023545">
    <property type="entry name" value="rRNA_ssu_MeTfrase_F"/>
</dbReference>
<dbReference type="InterPro" id="IPR018314">
    <property type="entry name" value="RsmB/NOL1/NOP2-like_CS"/>
</dbReference>
<dbReference type="InterPro" id="IPR029063">
    <property type="entry name" value="SAM-dependent_MTases_sf"/>
</dbReference>
<dbReference type="InterPro" id="IPR048457">
    <property type="entry name" value="YebU_pre-PUA_dom"/>
</dbReference>
<dbReference type="NCBIfam" id="TIGR00446">
    <property type="entry name" value="nop2p"/>
    <property type="match status" value="1"/>
</dbReference>
<dbReference type="NCBIfam" id="NF008898">
    <property type="entry name" value="PRK11933.1"/>
    <property type="match status" value="1"/>
</dbReference>
<dbReference type="PANTHER" id="PTHR22807:SF30">
    <property type="entry name" value="28S RRNA (CYTOSINE(4447)-C(5))-METHYLTRANSFERASE-RELATED"/>
    <property type="match status" value="1"/>
</dbReference>
<dbReference type="PANTHER" id="PTHR22807">
    <property type="entry name" value="NOP2 YEAST -RELATED NOL1/NOP2/FMU SUN DOMAIN-CONTAINING"/>
    <property type="match status" value="1"/>
</dbReference>
<dbReference type="Pfam" id="PF01189">
    <property type="entry name" value="Methyltr_RsmB-F"/>
    <property type="match status" value="1"/>
</dbReference>
<dbReference type="Pfam" id="PF17125">
    <property type="entry name" value="Methyltr_RsmF_N"/>
    <property type="match status" value="1"/>
</dbReference>
<dbReference type="Pfam" id="PF13636">
    <property type="entry name" value="Methyltranf_PUA"/>
    <property type="match status" value="1"/>
</dbReference>
<dbReference type="Pfam" id="PF21150">
    <property type="entry name" value="YebU_pre-PUA_dom"/>
    <property type="match status" value="1"/>
</dbReference>
<dbReference type="PRINTS" id="PR02008">
    <property type="entry name" value="RCMTFAMILY"/>
</dbReference>
<dbReference type="SUPFAM" id="SSF53335">
    <property type="entry name" value="S-adenosyl-L-methionine-dependent methyltransferases"/>
    <property type="match status" value="1"/>
</dbReference>
<dbReference type="PROSITE" id="PS01153">
    <property type="entry name" value="NOL1_NOP2_SUN"/>
    <property type="match status" value="1"/>
</dbReference>
<dbReference type="PROSITE" id="PS51686">
    <property type="entry name" value="SAM_MT_RSMB_NOP"/>
    <property type="match status" value="1"/>
</dbReference>
<comment type="function">
    <text evidence="1">Specifically methylates the cytosine at position 1407 (m5C1407) of 16S rRNA.</text>
</comment>
<comment type="catalytic activity">
    <reaction evidence="1">
        <text>cytidine(1407) in 16S rRNA + S-adenosyl-L-methionine = 5-methylcytidine(1407) in 16S rRNA + S-adenosyl-L-homocysteine + H(+)</text>
        <dbReference type="Rhea" id="RHEA:42756"/>
        <dbReference type="Rhea" id="RHEA-COMP:10223"/>
        <dbReference type="Rhea" id="RHEA-COMP:10224"/>
        <dbReference type="ChEBI" id="CHEBI:15378"/>
        <dbReference type="ChEBI" id="CHEBI:57856"/>
        <dbReference type="ChEBI" id="CHEBI:59789"/>
        <dbReference type="ChEBI" id="CHEBI:74483"/>
        <dbReference type="ChEBI" id="CHEBI:82748"/>
        <dbReference type="EC" id="2.1.1.178"/>
    </reaction>
</comment>
<comment type="subcellular location">
    <subcellularLocation>
        <location evidence="1">Cytoplasm</location>
    </subcellularLocation>
</comment>
<comment type="similarity">
    <text evidence="1">Belongs to the class I-like SAM-binding methyltransferase superfamily. RsmB/NOP family.</text>
</comment>
<comment type="sequence caution" evidence="2">
    <conflict type="erroneous initiation">
        <sequence resource="EMBL-CDS" id="ABB65878"/>
    </conflict>
</comment>
<name>RSMF_SHIBS</name>
<proteinExistence type="inferred from homology"/>
<accession>Q321Y0</accession>
<evidence type="ECO:0000255" key="1">
    <source>
        <dbReference type="HAMAP-Rule" id="MF_01579"/>
    </source>
</evidence>
<evidence type="ECO:0000305" key="2"/>
<reference key="1">
    <citation type="journal article" date="2005" name="Nucleic Acids Res.">
        <title>Genome dynamics and diversity of Shigella species, the etiologic agents of bacillary dysentery.</title>
        <authorList>
            <person name="Yang F."/>
            <person name="Yang J."/>
            <person name="Zhang X."/>
            <person name="Chen L."/>
            <person name="Jiang Y."/>
            <person name="Yan Y."/>
            <person name="Tang X."/>
            <person name="Wang J."/>
            <person name="Xiong Z."/>
            <person name="Dong J."/>
            <person name="Xue Y."/>
            <person name="Zhu Y."/>
            <person name="Xu X."/>
            <person name="Sun L."/>
            <person name="Chen S."/>
            <person name="Nie H."/>
            <person name="Peng J."/>
            <person name="Xu J."/>
            <person name="Wang Y."/>
            <person name="Yuan Z."/>
            <person name="Wen Y."/>
            <person name="Yao Z."/>
            <person name="Shen Y."/>
            <person name="Qiang B."/>
            <person name="Hou Y."/>
            <person name="Yu J."/>
            <person name="Jin Q."/>
        </authorList>
    </citation>
    <scope>NUCLEOTIDE SEQUENCE [LARGE SCALE GENOMIC DNA]</scope>
    <source>
        <strain>Sb227</strain>
    </source>
</reference>
<keyword id="KW-0963">Cytoplasm</keyword>
<keyword id="KW-0489">Methyltransferase</keyword>
<keyword id="KW-0694">RNA-binding</keyword>
<keyword id="KW-0698">rRNA processing</keyword>
<keyword id="KW-0949">S-adenosyl-L-methionine</keyword>
<keyword id="KW-0808">Transferase</keyword>